<evidence type="ECO:0000255" key="1">
    <source>
        <dbReference type="HAMAP-Rule" id="MF_00291"/>
    </source>
</evidence>
<evidence type="ECO:0000305" key="2"/>
<gene>
    <name evidence="1" type="primary">rpsB</name>
    <name type="ordered locus">Deide_13180</name>
</gene>
<keyword id="KW-1185">Reference proteome</keyword>
<keyword id="KW-0687">Ribonucleoprotein</keyword>
<keyword id="KW-0689">Ribosomal protein</keyword>
<proteinExistence type="inferred from homology"/>
<accession>C1CVN8</accession>
<organism>
    <name type="scientific">Deinococcus deserti (strain DSM 17065 / CIP 109153 / LMG 22923 / VCD115)</name>
    <dbReference type="NCBI Taxonomy" id="546414"/>
    <lineage>
        <taxon>Bacteria</taxon>
        <taxon>Thermotogati</taxon>
        <taxon>Deinococcota</taxon>
        <taxon>Deinococci</taxon>
        <taxon>Deinococcales</taxon>
        <taxon>Deinococcaceae</taxon>
        <taxon>Deinococcus</taxon>
    </lineage>
</organism>
<name>RS2_DEIDV</name>
<feature type="chain" id="PRO_1000204878" description="Small ribosomal subunit protein uS2">
    <location>
        <begin position="1"/>
        <end position="251"/>
    </location>
</feature>
<sequence>MSYISMKQLLEAGVHFGHETKRWNPKFKRFIFAERNGIFIIDLQKTLKQVDRSFDYIKDLSERGGVILFVGTKKQAQEIVELEARRTGMPFVTSRWLGGMLTNFKTMRTRIDRLTELDELFESGRINDRLKAERIKLGAERERLQRFVGGIRKMTRLPDAIFVVDPTKEVIAVQEANKLGIPVIALADTDSDPDVIDYIVPGNDDAIRSIQLITHRIGDLLVEARGGGEDVAAEGMEQGAQTDEQAEEVQA</sequence>
<dbReference type="EMBL" id="CP001114">
    <property type="protein sequence ID" value="ACO46255.2"/>
    <property type="molecule type" value="Genomic_DNA"/>
</dbReference>
<dbReference type="RefSeq" id="WP_012693378.1">
    <property type="nucleotide sequence ID" value="NC_012526.1"/>
</dbReference>
<dbReference type="SMR" id="C1CVN8"/>
<dbReference type="STRING" id="546414.Deide_13180"/>
<dbReference type="PaxDb" id="546414-Deide_13180"/>
<dbReference type="KEGG" id="ddr:Deide_13180"/>
<dbReference type="eggNOG" id="COG0052">
    <property type="taxonomic scope" value="Bacteria"/>
</dbReference>
<dbReference type="HOGENOM" id="CLU_040318_1_2_0"/>
<dbReference type="OrthoDB" id="9808036at2"/>
<dbReference type="Proteomes" id="UP000002208">
    <property type="component" value="Chromosome"/>
</dbReference>
<dbReference type="GO" id="GO:0022627">
    <property type="term" value="C:cytosolic small ribosomal subunit"/>
    <property type="evidence" value="ECO:0007669"/>
    <property type="project" value="TreeGrafter"/>
</dbReference>
<dbReference type="GO" id="GO:0003735">
    <property type="term" value="F:structural constituent of ribosome"/>
    <property type="evidence" value="ECO:0007669"/>
    <property type="project" value="InterPro"/>
</dbReference>
<dbReference type="GO" id="GO:0006412">
    <property type="term" value="P:translation"/>
    <property type="evidence" value="ECO:0007669"/>
    <property type="project" value="UniProtKB-UniRule"/>
</dbReference>
<dbReference type="CDD" id="cd01425">
    <property type="entry name" value="RPS2"/>
    <property type="match status" value="1"/>
</dbReference>
<dbReference type="FunFam" id="1.10.287.610:FF:000001">
    <property type="entry name" value="30S ribosomal protein S2"/>
    <property type="match status" value="1"/>
</dbReference>
<dbReference type="Gene3D" id="3.40.50.10490">
    <property type="entry name" value="Glucose-6-phosphate isomerase like protein, domain 1"/>
    <property type="match status" value="1"/>
</dbReference>
<dbReference type="Gene3D" id="1.10.287.610">
    <property type="entry name" value="Helix hairpin bin"/>
    <property type="match status" value="1"/>
</dbReference>
<dbReference type="HAMAP" id="MF_00291_B">
    <property type="entry name" value="Ribosomal_uS2_B"/>
    <property type="match status" value="1"/>
</dbReference>
<dbReference type="InterPro" id="IPR001865">
    <property type="entry name" value="Ribosomal_uS2"/>
</dbReference>
<dbReference type="InterPro" id="IPR005706">
    <property type="entry name" value="Ribosomal_uS2_bac/mit/plastid"/>
</dbReference>
<dbReference type="InterPro" id="IPR018130">
    <property type="entry name" value="Ribosomal_uS2_CS"/>
</dbReference>
<dbReference type="InterPro" id="IPR023591">
    <property type="entry name" value="Ribosomal_uS2_flav_dom_sf"/>
</dbReference>
<dbReference type="NCBIfam" id="TIGR01011">
    <property type="entry name" value="rpsB_bact"/>
    <property type="match status" value="1"/>
</dbReference>
<dbReference type="PANTHER" id="PTHR12534">
    <property type="entry name" value="30S RIBOSOMAL PROTEIN S2 PROKARYOTIC AND ORGANELLAR"/>
    <property type="match status" value="1"/>
</dbReference>
<dbReference type="PANTHER" id="PTHR12534:SF0">
    <property type="entry name" value="SMALL RIBOSOMAL SUBUNIT PROTEIN US2M"/>
    <property type="match status" value="1"/>
</dbReference>
<dbReference type="Pfam" id="PF00318">
    <property type="entry name" value="Ribosomal_S2"/>
    <property type="match status" value="1"/>
</dbReference>
<dbReference type="PRINTS" id="PR00395">
    <property type="entry name" value="RIBOSOMALS2"/>
</dbReference>
<dbReference type="SUPFAM" id="SSF52313">
    <property type="entry name" value="Ribosomal protein S2"/>
    <property type="match status" value="1"/>
</dbReference>
<dbReference type="PROSITE" id="PS00962">
    <property type="entry name" value="RIBOSOMAL_S2_1"/>
    <property type="match status" value="1"/>
</dbReference>
<dbReference type="PROSITE" id="PS00963">
    <property type="entry name" value="RIBOSOMAL_S2_2"/>
    <property type="match status" value="1"/>
</dbReference>
<comment type="similarity">
    <text evidence="1">Belongs to the universal ribosomal protein uS2 family.</text>
</comment>
<protein>
    <recommendedName>
        <fullName evidence="1">Small ribosomal subunit protein uS2</fullName>
    </recommendedName>
    <alternativeName>
        <fullName evidence="2">30S ribosomal protein S2</fullName>
    </alternativeName>
</protein>
<reference key="1">
    <citation type="journal article" date="2009" name="PLoS Genet.">
        <title>Alliance of proteomics and genomics to unravel the specificities of Sahara bacterium Deinococcus deserti.</title>
        <authorList>
            <person name="de Groot A."/>
            <person name="Dulermo R."/>
            <person name="Ortet P."/>
            <person name="Blanchard L."/>
            <person name="Guerin P."/>
            <person name="Fernandez B."/>
            <person name="Vacherie B."/>
            <person name="Dossat C."/>
            <person name="Jolivet E."/>
            <person name="Siguier P."/>
            <person name="Chandler M."/>
            <person name="Barakat M."/>
            <person name="Dedieu A."/>
            <person name="Barbe V."/>
            <person name="Heulin T."/>
            <person name="Sommer S."/>
            <person name="Achouak W."/>
            <person name="Armengaud J."/>
        </authorList>
    </citation>
    <scope>NUCLEOTIDE SEQUENCE [LARGE SCALE GENOMIC DNA]</scope>
    <source>
        <strain>DSM 17065 / CIP 109153 / LMG 22923 / VCD115</strain>
    </source>
</reference>